<gene>
    <name evidence="3" type="primary">derI1</name>
    <name evidence="5" type="ordered locus">MSMEG_3272</name>
    <name evidence="6" type="ordered locus">MSMEI_3188</name>
</gene>
<comment type="function">
    <text evidence="2">Catalyzes the isomerization of D-erythrulose-4P to D-erythrose-4P. Involved in the degradation pathways of erythritol and D-threitol, that allow M.smegmatis to grow on these compounds as the sole carbon source.</text>
</comment>
<comment type="catalytic activity">
    <reaction evidence="2">
        <text>D-erythrulose 4-phosphate = D-erythrose 4-phosphate</text>
        <dbReference type="Rhea" id="RHEA:48784"/>
        <dbReference type="ChEBI" id="CHEBI:16897"/>
        <dbReference type="ChEBI" id="CHEBI:90796"/>
        <dbReference type="EC" id="5.3.1.34"/>
    </reaction>
</comment>
<comment type="pathway">
    <text evidence="2">Carbohydrate metabolism; erythritol degradation.</text>
</comment>
<comment type="pathway">
    <text evidence="2">Carbohydrate metabolism; D-threitol degradation.</text>
</comment>
<comment type="induction">
    <text evidence="2">Up-regulated during growth on erythritol, D-threitol or L-threitol relative to growth on glycerol.</text>
</comment>
<comment type="disruption phenotype">
    <text evidence="2">Cells lacking both derI1 and derI2 are totally unable to grow on D-threitol or on erythritol.</text>
</comment>
<comment type="similarity">
    <text evidence="4">Belongs to the LacAB/RpiB family.</text>
</comment>
<protein>
    <recommendedName>
        <fullName evidence="3">D-erythrulose-4-phosphate isomerase 1</fullName>
        <ecNumber evidence="2">5.3.1.34</ecNumber>
    </recommendedName>
</protein>
<reference key="1">
    <citation type="submission" date="2006-10" db="EMBL/GenBank/DDBJ databases">
        <authorList>
            <person name="Fleischmann R.D."/>
            <person name="Dodson R.J."/>
            <person name="Haft D.H."/>
            <person name="Merkel J.S."/>
            <person name="Nelson W.C."/>
            <person name="Fraser C.M."/>
        </authorList>
    </citation>
    <scope>NUCLEOTIDE SEQUENCE [LARGE SCALE GENOMIC DNA]</scope>
    <source>
        <strain>ATCC 700084 / mc(2)155</strain>
    </source>
</reference>
<reference key="2">
    <citation type="journal article" date="2007" name="Genome Biol.">
        <title>Interrupted coding sequences in Mycobacterium smegmatis: authentic mutations or sequencing errors?</title>
        <authorList>
            <person name="Deshayes C."/>
            <person name="Perrodou E."/>
            <person name="Gallien S."/>
            <person name="Euphrasie D."/>
            <person name="Schaeffer C."/>
            <person name="Van-Dorsselaer A."/>
            <person name="Poch O."/>
            <person name="Lecompte O."/>
            <person name="Reyrat J.-M."/>
        </authorList>
    </citation>
    <scope>NUCLEOTIDE SEQUENCE [LARGE SCALE GENOMIC DNA]</scope>
    <source>
        <strain>ATCC 700084 / mc(2)155</strain>
    </source>
</reference>
<reference key="3">
    <citation type="journal article" date="2009" name="Genome Res.">
        <title>Ortho-proteogenomics: multiple proteomes investigation through orthology and a new MS-based protocol.</title>
        <authorList>
            <person name="Gallien S."/>
            <person name="Perrodou E."/>
            <person name="Carapito C."/>
            <person name="Deshayes C."/>
            <person name="Reyrat J.-M."/>
            <person name="Van Dorsselaer A."/>
            <person name="Poch O."/>
            <person name="Schaeffer C."/>
            <person name="Lecompte O."/>
        </authorList>
    </citation>
    <scope>NUCLEOTIDE SEQUENCE [LARGE SCALE GENOMIC DNA]</scope>
    <source>
        <strain>ATCC 700084 / mc(2)155</strain>
    </source>
</reference>
<reference key="4">
    <citation type="journal article" date="2015" name="J. Am. Chem. Soc.">
        <title>A general strategy for the discovery of metabolic pathways: D-threitol, L-threitol, and erythritol utilization in Mycobacterium smegmatis.</title>
        <authorList>
            <person name="Huang H."/>
            <person name="Carter M.S."/>
            <person name="Vetting M.W."/>
            <person name="Al-Obaidi N."/>
            <person name="Patskovsky Y."/>
            <person name="Almo S.C."/>
            <person name="Gerlt J.A."/>
        </authorList>
    </citation>
    <scope>FUNCTION</scope>
    <scope>CATALYTIC ACTIVITY</scope>
    <scope>INDUCTION</scope>
    <scope>DISRUPTION PHENOTYPE</scope>
    <scope>PATHWAY</scope>
    <source>
        <strain>ATCC 700084 / mc(2)155</strain>
    </source>
</reference>
<dbReference type="EC" id="5.3.1.34" evidence="2"/>
<dbReference type="EMBL" id="CP000480">
    <property type="protein sequence ID" value="ABK70126.1"/>
    <property type="molecule type" value="Genomic_DNA"/>
</dbReference>
<dbReference type="EMBL" id="CP001663">
    <property type="protein sequence ID" value="AFP39651.1"/>
    <property type="molecule type" value="Genomic_DNA"/>
</dbReference>
<dbReference type="RefSeq" id="WP_011728942.1">
    <property type="nucleotide sequence ID" value="NZ_SIJM01000015.1"/>
</dbReference>
<dbReference type="RefSeq" id="YP_887583.1">
    <property type="nucleotide sequence ID" value="NC_008596.1"/>
</dbReference>
<dbReference type="SMR" id="A0QXE5"/>
<dbReference type="STRING" id="246196.MSMEG_3272"/>
<dbReference type="PaxDb" id="246196-MSMEI_3188"/>
<dbReference type="GeneID" id="93458041"/>
<dbReference type="KEGG" id="msb:LJ00_16265"/>
<dbReference type="KEGG" id="msg:MSMEI_3188"/>
<dbReference type="KEGG" id="msm:MSMEG_3272"/>
<dbReference type="PATRIC" id="fig|246196.19.peg.3233"/>
<dbReference type="eggNOG" id="COG0698">
    <property type="taxonomic scope" value="Bacteria"/>
</dbReference>
<dbReference type="OrthoDB" id="1778624at2"/>
<dbReference type="BioCyc" id="MetaCyc:MONOMER-19891"/>
<dbReference type="UniPathway" id="UPA01065"/>
<dbReference type="UniPathway" id="UPA01066"/>
<dbReference type="Proteomes" id="UP000000757">
    <property type="component" value="Chromosome"/>
</dbReference>
<dbReference type="Proteomes" id="UP000006158">
    <property type="component" value="Chromosome"/>
</dbReference>
<dbReference type="GO" id="GO:0016861">
    <property type="term" value="F:intramolecular oxidoreductase activity, interconverting aldoses and ketoses"/>
    <property type="evidence" value="ECO:0000314"/>
    <property type="project" value="UniProtKB"/>
</dbReference>
<dbReference type="GO" id="GO:0016052">
    <property type="term" value="P:carbohydrate catabolic process"/>
    <property type="evidence" value="ECO:0000315"/>
    <property type="project" value="UniProtKB"/>
</dbReference>
<dbReference type="GO" id="GO:0009758">
    <property type="term" value="P:carbohydrate utilization"/>
    <property type="evidence" value="ECO:0000315"/>
    <property type="project" value="UniProtKB"/>
</dbReference>
<dbReference type="GO" id="GO:0071322">
    <property type="term" value="P:cellular response to carbohydrate stimulus"/>
    <property type="evidence" value="ECO:0000314"/>
    <property type="project" value="UniProtKB"/>
</dbReference>
<dbReference type="FunFam" id="3.40.1400.10:FF:000004">
    <property type="entry name" value="Ribose 5-phosphate isomerase"/>
    <property type="match status" value="1"/>
</dbReference>
<dbReference type="Gene3D" id="3.40.1400.10">
    <property type="entry name" value="Sugar-phosphate isomerase, RpiB/LacA/LacB"/>
    <property type="match status" value="1"/>
</dbReference>
<dbReference type="InterPro" id="IPR011860">
    <property type="entry name" value="Rib-5-P_Isoase_Actino"/>
</dbReference>
<dbReference type="InterPro" id="IPR003500">
    <property type="entry name" value="RpiB_LacA_LacB"/>
</dbReference>
<dbReference type="InterPro" id="IPR036569">
    <property type="entry name" value="RpiB_LacA_LacB_sf"/>
</dbReference>
<dbReference type="InterPro" id="IPR051812">
    <property type="entry name" value="SPI_LacAB/RpiB"/>
</dbReference>
<dbReference type="NCBIfam" id="NF004051">
    <property type="entry name" value="PRK05571.1"/>
    <property type="match status" value="1"/>
</dbReference>
<dbReference type="NCBIfam" id="TIGR02133">
    <property type="entry name" value="RPI_actino"/>
    <property type="match status" value="1"/>
</dbReference>
<dbReference type="NCBIfam" id="TIGR00689">
    <property type="entry name" value="rpiB_lacA_lacB"/>
    <property type="match status" value="1"/>
</dbReference>
<dbReference type="PANTHER" id="PTHR43732:SF1">
    <property type="entry name" value="RIBOSE 5-PHOSPHATE ISOMERASE"/>
    <property type="match status" value="1"/>
</dbReference>
<dbReference type="PANTHER" id="PTHR43732">
    <property type="entry name" value="RIBOSE 5-PHOSPHATE ISOMERASE-RELATED"/>
    <property type="match status" value="1"/>
</dbReference>
<dbReference type="Pfam" id="PF02502">
    <property type="entry name" value="LacAB_rpiB"/>
    <property type="match status" value="1"/>
</dbReference>
<dbReference type="PIRSF" id="PIRSF005384">
    <property type="entry name" value="RpiB_LacA_B"/>
    <property type="match status" value="1"/>
</dbReference>
<dbReference type="SUPFAM" id="SSF89623">
    <property type="entry name" value="Ribose/Galactose isomerase RpiB/AlsB"/>
    <property type="match status" value="1"/>
</dbReference>
<accession>A0QXE5</accession>
<sequence length="153" mass="16108">MALRVVVGADDAGYEYKEALKGDLAADDRVTEVIDVGVGADEDTAYPHVAVAAARLIAEGKADRALLVCGTGLGVAISANKVPGIRAVTAHDSFSVERSVLSNNAQVLCFGQRVVGLELARRLAREWLGYEFDPTSKSAEKVQAICGYEPATS</sequence>
<evidence type="ECO:0000250" key="1">
    <source>
        <dbReference type="UniProtKB" id="P37351"/>
    </source>
</evidence>
<evidence type="ECO:0000269" key="2">
    <source>
    </source>
</evidence>
<evidence type="ECO:0000303" key="3">
    <source>
    </source>
</evidence>
<evidence type="ECO:0000305" key="4"/>
<evidence type="ECO:0000312" key="5">
    <source>
        <dbReference type="EMBL" id="ABK70126.1"/>
    </source>
</evidence>
<evidence type="ECO:0000312" key="6">
    <source>
        <dbReference type="EMBL" id="AFP39651.1"/>
    </source>
</evidence>
<keyword id="KW-0119">Carbohydrate metabolism</keyword>
<keyword id="KW-0413">Isomerase</keyword>
<keyword id="KW-1185">Reference proteome</keyword>
<proteinExistence type="evidence at protein level"/>
<organism>
    <name type="scientific">Mycolicibacterium smegmatis (strain ATCC 700084 / mc(2)155)</name>
    <name type="common">Mycobacterium smegmatis</name>
    <dbReference type="NCBI Taxonomy" id="246196"/>
    <lineage>
        <taxon>Bacteria</taxon>
        <taxon>Bacillati</taxon>
        <taxon>Actinomycetota</taxon>
        <taxon>Actinomycetes</taxon>
        <taxon>Mycobacteriales</taxon>
        <taxon>Mycobacteriaceae</taxon>
        <taxon>Mycolicibacterium</taxon>
    </lineage>
</organism>
<name>DERI1_MYCS2</name>
<feature type="chain" id="PRO_0000435517" description="D-erythrulose-4-phosphate isomerase 1">
    <location>
        <begin position="1"/>
        <end position="153"/>
    </location>
</feature>
<feature type="active site" description="Proton acceptor" evidence="1">
    <location>
        <position position="69"/>
    </location>
</feature>